<comment type="catalytic activity">
    <reaction>
        <text>prephenate + H(+) = 3-phenylpyruvate + CO2 + H2O</text>
        <dbReference type="Rhea" id="RHEA:21648"/>
        <dbReference type="ChEBI" id="CHEBI:15377"/>
        <dbReference type="ChEBI" id="CHEBI:15378"/>
        <dbReference type="ChEBI" id="CHEBI:16526"/>
        <dbReference type="ChEBI" id="CHEBI:18005"/>
        <dbReference type="ChEBI" id="CHEBI:29934"/>
        <dbReference type="EC" id="4.2.1.51"/>
    </reaction>
</comment>
<comment type="pathway">
    <text>Amino-acid biosynthesis; L-phenylalanine biosynthesis; phenylpyruvate from prephenate: step 1/1.</text>
</comment>
<feature type="chain" id="PRO_0000119179" description="Prephenate dehydratase">
    <location>
        <begin position="1"/>
        <end position="279"/>
    </location>
</feature>
<feature type="domain" description="Prephenate dehydratase" evidence="2">
    <location>
        <begin position="2"/>
        <end position="178"/>
    </location>
</feature>
<feature type="domain" description="ACT" evidence="3">
    <location>
        <begin position="194"/>
        <end position="272"/>
    </location>
</feature>
<feature type="site" description="Essential for activity" evidence="1">
    <location>
        <position position="171"/>
    </location>
</feature>
<name>PHEA_LACLM</name>
<protein>
    <recommendedName>
        <fullName>Prephenate dehydratase</fullName>
        <shortName>PDT</shortName>
        <ecNumber>4.2.1.51</ecNumber>
    </recommendedName>
</protein>
<evidence type="ECO:0000250" key="1"/>
<evidence type="ECO:0000255" key="2">
    <source>
        <dbReference type="PROSITE-ProRule" id="PRU00517"/>
    </source>
</evidence>
<evidence type="ECO:0000255" key="3">
    <source>
        <dbReference type="PROSITE-ProRule" id="PRU01007"/>
    </source>
</evidence>
<gene>
    <name type="primary">pheA</name>
    <name type="ordered locus">llmg_1924</name>
</gene>
<dbReference type="EC" id="4.2.1.51"/>
<dbReference type="EMBL" id="X78413">
    <property type="protein sequence ID" value="CAA55182.1"/>
    <property type="molecule type" value="Genomic_DNA"/>
</dbReference>
<dbReference type="EMBL" id="AM406671">
    <property type="protein sequence ID" value="CAL98493.1"/>
    <property type="molecule type" value="Genomic_DNA"/>
</dbReference>
<dbReference type="PIR" id="S52582">
    <property type="entry name" value="S52582"/>
</dbReference>
<dbReference type="RefSeq" id="WP_011835672.1">
    <property type="nucleotide sequence ID" value="NC_009004.1"/>
</dbReference>
<dbReference type="SMR" id="P43909"/>
<dbReference type="STRING" id="416870.llmg_1924"/>
<dbReference type="KEGG" id="llm:llmg_1924"/>
<dbReference type="eggNOG" id="COG0077">
    <property type="taxonomic scope" value="Bacteria"/>
</dbReference>
<dbReference type="HOGENOM" id="CLU_035008_0_2_9"/>
<dbReference type="OrthoDB" id="9802281at2"/>
<dbReference type="PhylomeDB" id="P43909"/>
<dbReference type="UniPathway" id="UPA00121">
    <property type="reaction ID" value="UER00345"/>
</dbReference>
<dbReference type="Proteomes" id="UP000000364">
    <property type="component" value="Chromosome"/>
</dbReference>
<dbReference type="GO" id="GO:0005737">
    <property type="term" value="C:cytoplasm"/>
    <property type="evidence" value="ECO:0007669"/>
    <property type="project" value="TreeGrafter"/>
</dbReference>
<dbReference type="GO" id="GO:0004664">
    <property type="term" value="F:prephenate dehydratase activity"/>
    <property type="evidence" value="ECO:0007669"/>
    <property type="project" value="UniProtKB-EC"/>
</dbReference>
<dbReference type="GO" id="GO:0009094">
    <property type="term" value="P:L-phenylalanine biosynthetic process"/>
    <property type="evidence" value="ECO:0007669"/>
    <property type="project" value="UniProtKB-UniPathway"/>
</dbReference>
<dbReference type="CDD" id="cd04905">
    <property type="entry name" value="ACT_CM-PDT"/>
    <property type="match status" value="1"/>
</dbReference>
<dbReference type="FunFam" id="3.40.190.10:FF:000034">
    <property type="entry name" value="Chorismate mutase/prephenate dehydratase"/>
    <property type="match status" value="1"/>
</dbReference>
<dbReference type="Gene3D" id="3.30.70.260">
    <property type="match status" value="1"/>
</dbReference>
<dbReference type="Gene3D" id="3.40.190.10">
    <property type="entry name" value="Periplasmic binding protein-like II"/>
    <property type="match status" value="2"/>
</dbReference>
<dbReference type="InterPro" id="IPR045865">
    <property type="entry name" value="ACT-like_dom_sf"/>
</dbReference>
<dbReference type="InterPro" id="IPR002912">
    <property type="entry name" value="ACT_dom"/>
</dbReference>
<dbReference type="InterPro" id="IPR001086">
    <property type="entry name" value="Preph_deHydtase"/>
</dbReference>
<dbReference type="InterPro" id="IPR018528">
    <property type="entry name" value="Preph_deHydtase_CS"/>
</dbReference>
<dbReference type="NCBIfam" id="NF008865">
    <property type="entry name" value="PRK11898.1"/>
    <property type="match status" value="1"/>
</dbReference>
<dbReference type="PANTHER" id="PTHR21022">
    <property type="entry name" value="PREPHENATE DEHYDRATASE P PROTEIN"/>
    <property type="match status" value="1"/>
</dbReference>
<dbReference type="PANTHER" id="PTHR21022:SF19">
    <property type="entry name" value="PREPHENATE DEHYDRATASE-RELATED"/>
    <property type="match status" value="1"/>
</dbReference>
<dbReference type="Pfam" id="PF00800">
    <property type="entry name" value="PDT"/>
    <property type="match status" value="1"/>
</dbReference>
<dbReference type="SUPFAM" id="SSF55021">
    <property type="entry name" value="ACT-like"/>
    <property type="match status" value="1"/>
</dbReference>
<dbReference type="SUPFAM" id="SSF53850">
    <property type="entry name" value="Periplasmic binding protein-like II"/>
    <property type="match status" value="1"/>
</dbReference>
<dbReference type="PROSITE" id="PS51671">
    <property type="entry name" value="ACT"/>
    <property type="match status" value="1"/>
</dbReference>
<dbReference type="PROSITE" id="PS00857">
    <property type="entry name" value="PREPHENATE_DEHYDR_1"/>
    <property type="match status" value="1"/>
</dbReference>
<dbReference type="PROSITE" id="PS00858">
    <property type="entry name" value="PREPHENATE_DEHYDR_2"/>
    <property type="match status" value="1"/>
</dbReference>
<dbReference type="PROSITE" id="PS51171">
    <property type="entry name" value="PREPHENATE_DEHYDR_3"/>
    <property type="match status" value="1"/>
</dbReference>
<keyword id="KW-0028">Amino-acid biosynthesis</keyword>
<keyword id="KW-0057">Aromatic amino acid biosynthesis</keyword>
<keyword id="KW-0456">Lyase</keyword>
<keyword id="KW-0584">Phenylalanine biosynthesis</keyword>
<organism>
    <name type="scientific">Lactococcus lactis subsp. cremoris (strain MG1363)</name>
    <dbReference type="NCBI Taxonomy" id="416870"/>
    <lineage>
        <taxon>Bacteria</taxon>
        <taxon>Bacillati</taxon>
        <taxon>Bacillota</taxon>
        <taxon>Bacilli</taxon>
        <taxon>Lactobacillales</taxon>
        <taxon>Streptococcaceae</taxon>
        <taxon>Lactococcus</taxon>
        <taxon>Lactococcus cremoris subsp. cremoris</taxon>
    </lineage>
</organism>
<accession>P43909</accession>
<accession>A2RMG3</accession>
<sequence length="279" mass="31030">MKIAYLGPRGSFCSVVAEAAFKSEELYSYATILDVIEAYNEGECDFALVPIENSTEGTVNMSIDKIFHDSNAKVVAEFVLPISQNLLAVSKEQKIEHIYSHPQALAQTRVYLRKFYPQAQVEITESTSAAAEFVKNNPDLPAAAVANSFAAKMYDLEFIAENIQDLAGNSTRFWLLGKEKQSFDLNQTKDKVTLALTLPDNLPGALHKAISVFAWRDIDMTKIESRPLRTRLGQYFFIIDLENNATNSLKIPYALEELAGLGVNVRLLGNYSVYSLGEV</sequence>
<reference key="1">
    <citation type="journal article" date="1995" name="Mol. Gen. Genet.">
        <title>Genetic aspects of aromatic amino acid biosynthesis in Lactococcus lactis.</title>
        <authorList>
            <person name="Griffin H.G."/>
            <person name="Gasson M.J."/>
        </authorList>
    </citation>
    <scope>NUCLEOTIDE SEQUENCE [GENOMIC DNA]</scope>
    <source>
        <strain>MG1363 / F15876</strain>
    </source>
</reference>
<reference key="2">
    <citation type="journal article" date="2007" name="J. Bacteriol.">
        <title>The complete genome sequence of the lactic acid bacterial paradigm Lactococcus lactis subsp. cremoris MG1363.</title>
        <authorList>
            <person name="Wegmann U."/>
            <person name="O'Connell-Motherway M."/>
            <person name="Zomer A."/>
            <person name="Buist G."/>
            <person name="Shearman C."/>
            <person name="Canchaya C."/>
            <person name="Ventura M."/>
            <person name="Goesmann A."/>
            <person name="Gasson M.J."/>
            <person name="Kuipers O.P."/>
            <person name="van Sinderen D."/>
            <person name="Kok J."/>
        </authorList>
    </citation>
    <scope>NUCLEOTIDE SEQUENCE [LARGE SCALE GENOMIC DNA]</scope>
    <source>
        <strain>MG1363</strain>
    </source>
</reference>
<proteinExistence type="predicted"/>